<protein>
    <recommendedName>
        <fullName evidence="1">ATP phosphoribosyltransferase</fullName>
        <shortName evidence="1">ATP-PRT</shortName>
        <shortName evidence="1">ATP-PRTase</shortName>
        <ecNumber evidence="1">2.4.2.17</ecNumber>
    </recommendedName>
</protein>
<keyword id="KW-0028">Amino-acid biosynthesis</keyword>
<keyword id="KW-0067">ATP-binding</keyword>
<keyword id="KW-0963">Cytoplasm</keyword>
<keyword id="KW-0328">Glycosyltransferase</keyword>
<keyword id="KW-0368">Histidine biosynthesis</keyword>
<keyword id="KW-0460">Magnesium</keyword>
<keyword id="KW-0479">Metal-binding</keyword>
<keyword id="KW-0547">Nucleotide-binding</keyword>
<keyword id="KW-0808">Transferase</keyword>
<accession>B5YU75</accession>
<name>HIS1_ECO5E</name>
<proteinExistence type="inferred from homology"/>
<feature type="chain" id="PRO_1000092729" description="ATP phosphoribosyltransferase">
    <location>
        <begin position="1"/>
        <end position="299"/>
    </location>
</feature>
<dbReference type="EC" id="2.4.2.17" evidence="1"/>
<dbReference type="EMBL" id="CP001164">
    <property type="protein sequence ID" value="ACI35755.1"/>
    <property type="molecule type" value="Genomic_DNA"/>
</dbReference>
<dbReference type="RefSeq" id="WP_000131775.1">
    <property type="nucleotide sequence ID" value="NC_011353.1"/>
</dbReference>
<dbReference type="SMR" id="B5YU75"/>
<dbReference type="KEGG" id="ecf:ECH74115_2952"/>
<dbReference type="HOGENOM" id="CLU_038115_1_0_6"/>
<dbReference type="UniPathway" id="UPA00031">
    <property type="reaction ID" value="UER00006"/>
</dbReference>
<dbReference type="GO" id="GO:0005737">
    <property type="term" value="C:cytoplasm"/>
    <property type="evidence" value="ECO:0007669"/>
    <property type="project" value="UniProtKB-SubCell"/>
</dbReference>
<dbReference type="GO" id="GO:0005524">
    <property type="term" value="F:ATP binding"/>
    <property type="evidence" value="ECO:0007669"/>
    <property type="project" value="UniProtKB-KW"/>
</dbReference>
<dbReference type="GO" id="GO:0003879">
    <property type="term" value="F:ATP phosphoribosyltransferase activity"/>
    <property type="evidence" value="ECO:0007669"/>
    <property type="project" value="UniProtKB-UniRule"/>
</dbReference>
<dbReference type="GO" id="GO:0000287">
    <property type="term" value="F:magnesium ion binding"/>
    <property type="evidence" value="ECO:0007669"/>
    <property type="project" value="UniProtKB-UniRule"/>
</dbReference>
<dbReference type="GO" id="GO:0000105">
    <property type="term" value="P:L-histidine biosynthetic process"/>
    <property type="evidence" value="ECO:0007669"/>
    <property type="project" value="UniProtKB-UniRule"/>
</dbReference>
<dbReference type="CDD" id="cd13592">
    <property type="entry name" value="PBP2_HisGL2"/>
    <property type="match status" value="1"/>
</dbReference>
<dbReference type="FunFam" id="3.30.70.120:FF:000002">
    <property type="entry name" value="ATP phosphoribosyltransferase"/>
    <property type="match status" value="1"/>
</dbReference>
<dbReference type="FunFam" id="3.40.190.10:FF:000008">
    <property type="entry name" value="ATP phosphoribosyltransferase"/>
    <property type="match status" value="1"/>
</dbReference>
<dbReference type="Gene3D" id="3.30.70.120">
    <property type="match status" value="1"/>
</dbReference>
<dbReference type="Gene3D" id="3.40.190.10">
    <property type="entry name" value="Periplasmic binding protein-like II"/>
    <property type="match status" value="2"/>
</dbReference>
<dbReference type="HAMAP" id="MF_00079">
    <property type="entry name" value="HisG_Long"/>
    <property type="match status" value="1"/>
</dbReference>
<dbReference type="InterPro" id="IPR020621">
    <property type="entry name" value="ATP-PRT_HisG_long"/>
</dbReference>
<dbReference type="InterPro" id="IPR013820">
    <property type="entry name" value="ATP_PRibTrfase_cat"/>
</dbReference>
<dbReference type="InterPro" id="IPR018198">
    <property type="entry name" value="ATP_PRibTrfase_CS"/>
</dbReference>
<dbReference type="InterPro" id="IPR001348">
    <property type="entry name" value="ATP_PRibTrfase_HisG"/>
</dbReference>
<dbReference type="InterPro" id="IPR013115">
    <property type="entry name" value="HisG_C"/>
</dbReference>
<dbReference type="InterPro" id="IPR011322">
    <property type="entry name" value="N-reg_PII-like_a/b"/>
</dbReference>
<dbReference type="InterPro" id="IPR015867">
    <property type="entry name" value="N-reg_PII/ATP_PRibTrfase_C"/>
</dbReference>
<dbReference type="NCBIfam" id="TIGR00070">
    <property type="entry name" value="hisG"/>
    <property type="match status" value="1"/>
</dbReference>
<dbReference type="NCBIfam" id="TIGR03455">
    <property type="entry name" value="HisG_C-term"/>
    <property type="match status" value="1"/>
</dbReference>
<dbReference type="PANTHER" id="PTHR21403:SF8">
    <property type="entry name" value="ATP PHOSPHORIBOSYLTRANSFERASE"/>
    <property type="match status" value="1"/>
</dbReference>
<dbReference type="PANTHER" id="PTHR21403">
    <property type="entry name" value="ATP PHOSPHORIBOSYLTRANSFERASE ATP-PRTASE"/>
    <property type="match status" value="1"/>
</dbReference>
<dbReference type="Pfam" id="PF01634">
    <property type="entry name" value="HisG"/>
    <property type="match status" value="1"/>
</dbReference>
<dbReference type="Pfam" id="PF08029">
    <property type="entry name" value="HisG_C"/>
    <property type="match status" value="1"/>
</dbReference>
<dbReference type="SUPFAM" id="SSF54913">
    <property type="entry name" value="GlnB-like"/>
    <property type="match status" value="1"/>
</dbReference>
<dbReference type="SUPFAM" id="SSF53850">
    <property type="entry name" value="Periplasmic binding protein-like II"/>
    <property type="match status" value="1"/>
</dbReference>
<dbReference type="PROSITE" id="PS01316">
    <property type="entry name" value="ATP_P_PHORIBOSYLTR"/>
    <property type="match status" value="1"/>
</dbReference>
<reference key="1">
    <citation type="journal article" date="2011" name="Proc. Natl. Acad. Sci. U.S.A.">
        <title>Genomic anatomy of Escherichia coli O157:H7 outbreaks.</title>
        <authorList>
            <person name="Eppinger M."/>
            <person name="Mammel M.K."/>
            <person name="Leclerc J.E."/>
            <person name="Ravel J."/>
            <person name="Cebula T.A."/>
        </authorList>
    </citation>
    <scope>NUCLEOTIDE SEQUENCE [LARGE SCALE GENOMIC DNA]</scope>
    <source>
        <strain>EC4115 / EHEC</strain>
    </source>
</reference>
<organism>
    <name type="scientific">Escherichia coli O157:H7 (strain EC4115 / EHEC)</name>
    <dbReference type="NCBI Taxonomy" id="444450"/>
    <lineage>
        <taxon>Bacteria</taxon>
        <taxon>Pseudomonadati</taxon>
        <taxon>Pseudomonadota</taxon>
        <taxon>Gammaproteobacteria</taxon>
        <taxon>Enterobacterales</taxon>
        <taxon>Enterobacteriaceae</taxon>
        <taxon>Escherichia</taxon>
    </lineage>
</organism>
<gene>
    <name evidence="1" type="primary">hisG</name>
    <name type="ordered locus">ECH74115_2952</name>
</gene>
<evidence type="ECO:0000255" key="1">
    <source>
        <dbReference type="HAMAP-Rule" id="MF_00079"/>
    </source>
</evidence>
<comment type="function">
    <text evidence="1">Catalyzes the condensation of ATP and 5-phosphoribose 1-diphosphate to form N'-(5'-phosphoribosyl)-ATP (PR-ATP). Has a crucial role in the pathway because the rate of histidine biosynthesis seems to be controlled primarily by regulation of HisG enzymatic activity.</text>
</comment>
<comment type="catalytic activity">
    <reaction evidence="1">
        <text>1-(5-phospho-beta-D-ribosyl)-ATP + diphosphate = 5-phospho-alpha-D-ribose 1-diphosphate + ATP</text>
        <dbReference type="Rhea" id="RHEA:18473"/>
        <dbReference type="ChEBI" id="CHEBI:30616"/>
        <dbReference type="ChEBI" id="CHEBI:33019"/>
        <dbReference type="ChEBI" id="CHEBI:58017"/>
        <dbReference type="ChEBI" id="CHEBI:73183"/>
        <dbReference type="EC" id="2.4.2.17"/>
    </reaction>
</comment>
<comment type="cofactor">
    <cofactor evidence="1">
        <name>Mg(2+)</name>
        <dbReference type="ChEBI" id="CHEBI:18420"/>
    </cofactor>
</comment>
<comment type="activity regulation">
    <text evidence="1">Feedback inhibited by histidine.</text>
</comment>
<comment type="pathway">
    <text evidence="1">Amino-acid biosynthesis; L-histidine biosynthesis; L-histidine from 5-phospho-alpha-D-ribose 1-diphosphate: step 1/9.</text>
</comment>
<comment type="subunit">
    <text evidence="1">Equilibrium between an active dimeric form, an inactive hexameric form and higher aggregates. Interconversion between the various forms is largely reversible and is influenced by the natural substrates and inhibitors of the enzyme.</text>
</comment>
<comment type="subcellular location">
    <subcellularLocation>
        <location evidence="1">Cytoplasm</location>
    </subcellularLocation>
</comment>
<comment type="similarity">
    <text evidence="1">Belongs to the ATP phosphoribosyltransferase family. Long subfamily.</text>
</comment>
<sequence>MTDNTRLRIAMQKSGRLSDDSRELLARCGIKINLHTQRLIAMAENMPIDILRVRDDDIPGLVMDGVVDLGIIGENVLEEELLNRRAQGEDPRYFTLRRLDFGGCRLSLATPVDDAWDGPLSLNGKRIATSYPHLLKRYLDQKGISFKSCLLNGSVEVAPRAGLADAICDLVSTGATLEANGLREVEVIYRSKACLIQRDGEMEESKQQLIDKLLTRIQGVIQARESKYIMMHAPTQRLDEVIALLPGAERPTILPLAGDQQRVAMHMVSSETLFWETMEKLKALGASSILVLPIEKMME</sequence>